<feature type="chain" id="PRO_0000075700" description="Actin-binding LIM protein 2">
    <location>
        <begin position="1"/>
        <end position="612"/>
    </location>
</feature>
<feature type="domain" description="LIM zinc-binding 1" evidence="4">
    <location>
        <begin position="22"/>
        <end position="81"/>
    </location>
</feature>
<feature type="domain" description="LIM zinc-binding 2" evidence="4">
    <location>
        <begin position="81"/>
        <end position="141"/>
    </location>
</feature>
<feature type="domain" description="LIM zinc-binding 3" evidence="4">
    <location>
        <begin position="151"/>
        <end position="210"/>
    </location>
</feature>
<feature type="domain" description="LIM zinc-binding 4" evidence="4">
    <location>
        <begin position="210"/>
        <end position="270"/>
    </location>
</feature>
<feature type="domain" description="HP" evidence="5">
    <location>
        <begin position="544"/>
        <end position="612"/>
    </location>
</feature>
<feature type="region of interest" description="Disordered" evidence="6">
    <location>
        <begin position="269"/>
        <end position="295"/>
    </location>
</feature>
<feature type="region of interest" description="Disordered" evidence="6">
    <location>
        <begin position="341"/>
        <end position="433"/>
    </location>
</feature>
<feature type="region of interest" description="Disordered" evidence="6">
    <location>
        <begin position="471"/>
        <end position="498"/>
    </location>
</feature>
<feature type="compositionally biased region" description="Basic and acidic residues" evidence="6">
    <location>
        <begin position="269"/>
        <end position="278"/>
    </location>
</feature>
<feature type="compositionally biased region" description="Low complexity" evidence="6">
    <location>
        <begin position="279"/>
        <end position="295"/>
    </location>
</feature>
<feature type="compositionally biased region" description="Low complexity" evidence="6">
    <location>
        <begin position="364"/>
        <end position="373"/>
    </location>
</feature>
<feature type="compositionally biased region" description="Polar residues" evidence="6">
    <location>
        <begin position="394"/>
        <end position="416"/>
    </location>
</feature>
<feature type="compositionally biased region" description="Low complexity" evidence="6">
    <location>
        <begin position="477"/>
        <end position="489"/>
    </location>
</feature>
<feature type="binding site" evidence="1">
    <location>
        <position position="83"/>
    </location>
    <ligand>
        <name>Zn(2+)</name>
        <dbReference type="ChEBI" id="CHEBI:29105"/>
        <label>1</label>
    </ligand>
</feature>
<feature type="binding site" evidence="1">
    <location>
        <position position="86"/>
    </location>
    <ligand>
        <name>Zn(2+)</name>
        <dbReference type="ChEBI" id="CHEBI:29105"/>
        <label>1</label>
    </ligand>
</feature>
<feature type="binding site" evidence="1">
    <location>
        <position position="103"/>
    </location>
    <ligand>
        <name>Zn(2+)</name>
        <dbReference type="ChEBI" id="CHEBI:29105"/>
        <label>1</label>
    </ligand>
</feature>
<feature type="binding site" evidence="1">
    <location>
        <position position="106"/>
    </location>
    <ligand>
        <name>Zn(2+)</name>
        <dbReference type="ChEBI" id="CHEBI:29105"/>
        <label>1</label>
    </ligand>
</feature>
<feature type="binding site" evidence="1">
    <location>
        <position position="109"/>
    </location>
    <ligand>
        <name>Zn(2+)</name>
        <dbReference type="ChEBI" id="CHEBI:29105"/>
        <label>2</label>
    </ligand>
</feature>
<feature type="binding site" evidence="1">
    <location>
        <position position="112"/>
    </location>
    <ligand>
        <name>Zn(2+)</name>
        <dbReference type="ChEBI" id="CHEBI:29105"/>
        <label>2</label>
    </ligand>
</feature>
<feature type="binding site" evidence="1">
    <location>
        <position position="131"/>
    </location>
    <ligand>
        <name>Zn(2+)</name>
        <dbReference type="ChEBI" id="CHEBI:29105"/>
        <label>2</label>
    </ligand>
</feature>
<feature type="binding site" evidence="1">
    <location>
        <position position="134"/>
    </location>
    <ligand>
        <name>Zn(2+)</name>
        <dbReference type="ChEBI" id="CHEBI:29105"/>
        <label>2</label>
    </ligand>
</feature>
<feature type="binding site" evidence="1">
    <location>
        <position position="212"/>
    </location>
    <ligand>
        <name>Zn(2+)</name>
        <dbReference type="ChEBI" id="CHEBI:29105"/>
        <label>3</label>
    </ligand>
</feature>
<feature type="binding site" evidence="1">
    <location>
        <position position="215"/>
    </location>
    <ligand>
        <name>Zn(2+)</name>
        <dbReference type="ChEBI" id="CHEBI:29105"/>
        <label>3</label>
    </ligand>
</feature>
<feature type="binding site" evidence="1">
    <location>
        <position position="232"/>
    </location>
    <ligand>
        <name>Zn(2+)</name>
        <dbReference type="ChEBI" id="CHEBI:29105"/>
        <label>3</label>
    </ligand>
</feature>
<feature type="binding site" evidence="1">
    <location>
        <position position="235"/>
    </location>
    <ligand>
        <name>Zn(2+)</name>
        <dbReference type="ChEBI" id="CHEBI:29105"/>
        <label>3</label>
    </ligand>
</feature>
<feature type="binding site" evidence="1">
    <location>
        <position position="238"/>
    </location>
    <ligand>
        <name>Zn(2+)</name>
        <dbReference type="ChEBI" id="CHEBI:29105"/>
        <label>4</label>
    </ligand>
</feature>
<feature type="binding site" evidence="1">
    <location>
        <position position="241"/>
    </location>
    <ligand>
        <name>Zn(2+)</name>
        <dbReference type="ChEBI" id="CHEBI:29105"/>
        <label>4</label>
    </ligand>
</feature>
<feature type="binding site" evidence="1">
    <location>
        <position position="260"/>
    </location>
    <ligand>
        <name>Zn(2+)</name>
        <dbReference type="ChEBI" id="CHEBI:29105"/>
        <label>4</label>
    </ligand>
</feature>
<feature type="binding site" evidence="1">
    <location>
        <position position="263"/>
    </location>
    <ligand>
        <name>Zn(2+)</name>
        <dbReference type="ChEBI" id="CHEBI:29105"/>
        <label>4</label>
    </ligand>
</feature>
<feature type="modified residue" description="Phosphoserine" evidence="3">
    <location>
        <position position="282"/>
    </location>
</feature>
<feature type="modified residue" description="Phosphoserine" evidence="13">
    <location>
        <position position="294"/>
    </location>
</feature>
<feature type="modified residue" description="Phosphoserine" evidence="2">
    <location>
        <position position="365"/>
    </location>
</feature>
<feature type="modified residue" description="Phosphoserine" evidence="13">
    <location>
        <position position="368"/>
    </location>
</feature>
<feature type="modified residue" description="Phosphoserine" evidence="3">
    <location>
        <position position="453"/>
    </location>
</feature>
<feature type="modified residue" description="Phosphothreonine" evidence="13">
    <location>
        <position position="473"/>
    </location>
</feature>
<feature type="modified residue" description="Phosphoserine" evidence="3">
    <location>
        <position position="477"/>
    </location>
</feature>
<feature type="modified residue" description="Phosphoserine" evidence="3">
    <location>
        <position position="579"/>
    </location>
</feature>
<feature type="splice variant" id="VSP_012120" description="In isoform 4." evidence="9">
    <original>E</original>
    <variation>ESPQLLSPTPTE</variation>
    <location>
        <position position="350"/>
    </location>
</feature>
<feature type="splice variant" id="VSP_012121" description="In isoform 3, isoform 4 and isoform 5." evidence="8 9 11">
    <original>P</original>
    <variation>PAGTVSVGTSSCLSLSQHPSPTSVFRHHYIPYFR</variation>
    <location>
        <position position="390"/>
    </location>
</feature>
<feature type="splice variant" id="VSP_012122" description="In isoform 2, isoform 3 and isoform 4." evidence="8 9 10 11">
    <original>RFPYSKPDTLPGPRKDGLDLRNANLAPCGADPDASWGTRE</original>
    <variation>Q</variation>
    <location>
        <begin position="507"/>
        <end position="546"/>
    </location>
</feature>
<feature type="splice variant" id="VSP_012123" description="In isoform 5." evidence="9">
    <original>RFPYSKPDTLPGPRKDGLDL</original>
    <variation>QCQPGPLWSRPGCQLGHARV</variation>
    <location>
        <begin position="507"/>
        <end position="526"/>
    </location>
</feature>
<feature type="splice variant" id="VSP_012124" description="In isoform 5." evidence="9">
    <location>
        <begin position="527"/>
        <end position="612"/>
    </location>
</feature>
<feature type="sequence conflict" description="In Ref. 3; BAC32905." evidence="12" ref="3">
    <original>D</original>
    <variation>N</variation>
    <location>
        <position position="305"/>
    </location>
</feature>
<feature type="sequence conflict" description="In Ref. 3; BAC32905." evidence="12" ref="3">
    <original>D</original>
    <variation>N</variation>
    <location>
        <position position="406"/>
    </location>
</feature>
<feature type="modified residue" description="Phosphoserine" evidence="13">
    <location sequence="Q8BL65-4">
        <position position="351"/>
    </location>
</feature>
<feature type="modified residue" description="Phosphoserine" evidence="13">
    <location sequence="Q8BL65-4">
        <position position="356"/>
    </location>
</feature>
<accession>Q8BL65</accession>
<accession>B2RUF8</accession>
<accession>Q6H8P8</accession>
<accession>Q80WK6</accession>
<accession>Q8BUT1</accession>
<accession>Q8BXI7</accession>
<sequence>MSAVSQPQAAHAPLEKPASTAILCNTCGNVCKGEVLRVQNKYFHIRCFVCKACGCDLAEGGFFVRQGEHICTRDYQRLYGTRCFSCDRFIEGEVVSALGKTYHPDCFVCAVCRLPFPPGDRVTFNGKECMCQKCSPPTLLGNSAHVAQGLRSCGGCGLEIKNGQALVALDKHWHLGCFKCKTCGKLLNAEYISKDGLPYCEADYHSKFGIRCDGCEKYITGRVLEAGEKHYHPSCALCVRCGQMFSEGEEMYLQGSSIWHPACRQAARTEDKSKETRTSSESIVSVPASSTSGSPSRVIYAKLGDEILDYRDLAALPKNKAIYNIDRPDMISYSPYISHSAVGDRQSYGEGDQDDRSYKQCRTSSPSSAGSVSLGHYTPTSRSPQHYSRPGSESGRSTPSLSVHSDSRPPSSTYQQAPRHFHVPDTGVKDNIYRKPPIYKQHAARRLDVEDSSFDQDSRKKTTWLLLKGDADTRTNSPDLDSQSLSLSSGTDQEPLQRMAGDSLYSRFPYSKPDTLPGPRKDGLDLRNANLAPCGADPDASWGTREYKIYPYDSLIVTNRIRVKLPKDVDRTRLERHLSPEEFQEVFGMSIEEFDRLALWKRNDLKKKALLF</sequence>
<name>ABLM2_MOUSE</name>
<comment type="function">
    <text>May act as scaffold protein. May stimulate ABRA activity and ABRA-dependent SRF transcriptional activity.</text>
</comment>
<comment type="subunit">
    <text evidence="7">Interacts with F-actin and ABRA.</text>
</comment>
<comment type="subcellular location">
    <subcellularLocation>
        <location evidence="7">Cytoplasm</location>
    </subcellularLocation>
    <text>In skeletal muscle, sarcomeric or cosarcomeric localization.</text>
</comment>
<comment type="alternative products">
    <event type="alternative splicing"/>
    <isoform>
        <id>Q8BL65-1</id>
        <name>1</name>
        <sequence type="displayed"/>
    </isoform>
    <isoform>
        <id>Q8BL65-2</id>
        <name>2</name>
        <sequence type="described" ref="VSP_012122"/>
    </isoform>
    <isoform>
        <id>Q8BL65-3</id>
        <name>3</name>
        <sequence type="described" ref="VSP_012121 VSP_012122"/>
    </isoform>
    <isoform>
        <id>Q8BL65-4</id>
        <name>4</name>
        <sequence type="described" ref="VSP_012120 VSP_012121 VSP_012122"/>
    </isoform>
    <isoform>
        <id>Q8BL65-5</id>
        <name>5</name>
        <sequence type="described" ref="VSP_012121 VSP_012123 VSP_012124"/>
    </isoform>
</comment>
<comment type="tissue specificity">
    <text evidence="7">Expressed in brain. Highly expressed in caudate/putamen, moderately expressed in the olfactory bulb. In the hippocampus, expressed in the CA1, CA2 and CA3 fields. In the cerebellum, expressed in Purkinje cells.</text>
</comment>
<comment type="developmental stage">
    <text>At 15.5 dpc, predominantly expressed in skeletal muscle tissue, including diaphragm, and to a lesser extent in the central nervous system.</text>
</comment>
<protein>
    <recommendedName>
        <fullName>Actin-binding LIM protein 2</fullName>
        <shortName>abLIM-2</shortName>
    </recommendedName>
    <alternativeName>
        <fullName>Actin-binding LIM protein family member 2</fullName>
    </alternativeName>
</protein>
<keyword id="KW-0025">Alternative splicing</keyword>
<keyword id="KW-0963">Cytoplasm</keyword>
<keyword id="KW-0440">LIM domain</keyword>
<keyword id="KW-0479">Metal-binding</keyword>
<keyword id="KW-0597">Phosphoprotein</keyword>
<keyword id="KW-1185">Reference proteome</keyword>
<keyword id="KW-0677">Repeat</keyword>
<keyword id="KW-0862">Zinc</keyword>
<dbReference type="EMBL" id="AJ748602">
    <property type="protein sequence ID" value="CAG38377.1"/>
    <property type="molecule type" value="mRNA"/>
</dbReference>
<dbReference type="EMBL" id="AJ748603">
    <property type="protein sequence ID" value="CAG38378.1"/>
    <property type="molecule type" value="mRNA"/>
</dbReference>
<dbReference type="EMBL" id="AY274116">
    <property type="protein sequence ID" value="AAP23233.1"/>
    <property type="molecule type" value="mRNA"/>
</dbReference>
<dbReference type="EMBL" id="AK046243">
    <property type="protein sequence ID" value="BAC32651.1"/>
    <property type="molecule type" value="mRNA"/>
</dbReference>
<dbReference type="EMBL" id="AK046879">
    <property type="protein sequence ID" value="BAC32905.1"/>
    <property type="molecule type" value="mRNA"/>
</dbReference>
<dbReference type="EMBL" id="AK082707">
    <property type="protein sequence ID" value="BAC38580.1"/>
    <property type="molecule type" value="mRNA"/>
</dbReference>
<dbReference type="EMBL" id="BC141125">
    <property type="protein sequence ID" value="AAI41126.1"/>
    <property type="molecule type" value="mRNA"/>
</dbReference>
<dbReference type="CCDS" id="CCDS19235.1">
    <molecule id="Q8BL65-1"/>
</dbReference>
<dbReference type="CCDS" id="CCDS51475.1">
    <molecule id="Q8BL65-4"/>
</dbReference>
<dbReference type="CCDS" id="CCDS51476.1">
    <molecule id="Q8BL65-3"/>
</dbReference>
<dbReference type="CCDS" id="CCDS51477.1">
    <molecule id="Q8BL65-2"/>
</dbReference>
<dbReference type="RefSeq" id="NP_001171168.1">
    <molecule id="Q8BL65-4"/>
    <property type="nucleotide sequence ID" value="NM_001177697.1"/>
</dbReference>
<dbReference type="RefSeq" id="NP_001171170.1">
    <molecule id="Q8BL65-3"/>
    <property type="nucleotide sequence ID" value="NM_001177699.1"/>
</dbReference>
<dbReference type="RefSeq" id="NP_001171171.1">
    <molecule id="Q8BL65-2"/>
    <property type="nucleotide sequence ID" value="NM_001177700.1"/>
</dbReference>
<dbReference type="RefSeq" id="NP_808346.3">
    <molecule id="Q8BL65-1"/>
    <property type="nucleotide sequence ID" value="NM_177678.7"/>
</dbReference>
<dbReference type="BMRB" id="Q8BL65"/>
<dbReference type="SMR" id="Q8BL65"/>
<dbReference type="BioGRID" id="231091">
    <property type="interactions" value="12"/>
</dbReference>
<dbReference type="FunCoup" id="Q8BL65">
    <property type="interactions" value="143"/>
</dbReference>
<dbReference type="IntAct" id="Q8BL65">
    <property type="interactions" value="1"/>
</dbReference>
<dbReference type="MINT" id="Q8BL65"/>
<dbReference type="STRING" id="10090.ENSMUSP00000123525"/>
<dbReference type="GlyGen" id="Q8BL65">
    <property type="glycosylation" value="7 sites, 1 O-linked glycan (7 sites)"/>
</dbReference>
<dbReference type="iPTMnet" id="Q8BL65"/>
<dbReference type="PhosphoSitePlus" id="Q8BL65"/>
<dbReference type="SwissPalm" id="Q8BL65"/>
<dbReference type="PaxDb" id="10090-ENSMUSP00000123525"/>
<dbReference type="PeptideAtlas" id="Q8BL65"/>
<dbReference type="ProteomicsDB" id="285914">
    <molecule id="Q8BL65-1"/>
</dbReference>
<dbReference type="ProteomicsDB" id="285915">
    <molecule id="Q8BL65-2"/>
</dbReference>
<dbReference type="ProteomicsDB" id="285916">
    <molecule id="Q8BL65-3"/>
</dbReference>
<dbReference type="ProteomicsDB" id="285917">
    <molecule id="Q8BL65-4"/>
</dbReference>
<dbReference type="ProteomicsDB" id="285918">
    <molecule id="Q8BL65-5"/>
</dbReference>
<dbReference type="Antibodypedia" id="22725">
    <property type="antibodies" value="48 antibodies from 16 providers"/>
</dbReference>
<dbReference type="DNASU" id="231148"/>
<dbReference type="Ensembl" id="ENSMUST00000054598.12">
    <molecule id="Q8BL65-1"/>
    <property type="protein sequence ID" value="ENSMUSP00000050571.6"/>
    <property type="gene ID" value="ENSMUSG00000029095.18"/>
</dbReference>
<dbReference type="Ensembl" id="ENSMUST00000114204.8">
    <molecule id="Q8BL65-3"/>
    <property type="protein sequence ID" value="ENSMUSP00000109842.2"/>
    <property type="gene ID" value="ENSMUSG00000029095.18"/>
</dbReference>
<dbReference type="Ensembl" id="ENSMUST00000114205.8">
    <molecule id="Q8BL65-2"/>
    <property type="protein sequence ID" value="ENSMUSP00000109843.2"/>
    <property type="gene ID" value="ENSMUSG00000029095.18"/>
</dbReference>
<dbReference type="Ensembl" id="ENSMUST00000114206.9">
    <molecule id="Q8BL65-4"/>
    <property type="protein sequence ID" value="ENSMUSP00000109844.3"/>
    <property type="gene ID" value="ENSMUSG00000029095.18"/>
</dbReference>
<dbReference type="Ensembl" id="ENSMUST00000114210.9">
    <molecule id="Q8BL65-5"/>
    <property type="protein sequence ID" value="ENSMUSP00000109848.3"/>
    <property type="gene ID" value="ENSMUSG00000029095.18"/>
</dbReference>
<dbReference type="GeneID" id="231148"/>
<dbReference type="KEGG" id="mmu:231148"/>
<dbReference type="UCSC" id="uc008xeg.2">
    <molecule id="Q8BL65-1"/>
    <property type="organism name" value="mouse"/>
</dbReference>
<dbReference type="UCSC" id="uc033iiv.1">
    <molecule id="Q8BL65-2"/>
    <property type="organism name" value="mouse"/>
</dbReference>
<dbReference type="UCSC" id="uc033iiw.1">
    <molecule id="Q8BL65-4"/>
    <property type="organism name" value="mouse"/>
</dbReference>
<dbReference type="UCSC" id="uc033iix.1">
    <molecule id="Q8BL65-3"/>
    <property type="organism name" value="mouse"/>
</dbReference>
<dbReference type="AGR" id="MGI:2385758"/>
<dbReference type="CTD" id="84448"/>
<dbReference type="MGI" id="MGI:2385758">
    <property type="gene designation" value="Ablim2"/>
</dbReference>
<dbReference type="VEuPathDB" id="HostDB:ENSMUSG00000029095"/>
<dbReference type="eggNOG" id="KOG1044">
    <property type="taxonomic scope" value="Eukaryota"/>
</dbReference>
<dbReference type="GeneTree" id="ENSGT00950000182850"/>
<dbReference type="HOGENOM" id="CLU_001357_12_3_1"/>
<dbReference type="InParanoid" id="Q8BL65"/>
<dbReference type="OrthoDB" id="1746725at2759"/>
<dbReference type="PhylomeDB" id="Q8BL65"/>
<dbReference type="BioGRID-ORCS" id="231148">
    <property type="hits" value="0 hits in 77 CRISPR screens"/>
</dbReference>
<dbReference type="CD-CODE" id="CE726F99">
    <property type="entry name" value="Postsynaptic density"/>
</dbReference>
<dbReference type="ChiTaRS" id="Ablim2">
    <property type="organism name" value="mouse"/>
</dbReference>
<dbReference type="PRO" id="PR:Q8BL65"/>
<dbReference type="Proteomes" id="UP000000589">
    <property type="component" value="Chromosome 5"/>
</dbReference>
<dbReference type="RNAct" id="Q8BL65">
    <property type="molecule type" value="protein"/>
</dbReference>
<dbReference type="Bgee" id="ENSMUSG00000029095">
    <property type="expression patterns" value="Expressed in superior frontal gyrus and 189 other cell types or tissues"/>
</dbReference>
<dbReference type="ExpressionAtlas" id="Q8BL65">
    <property type="expression patterns" value="baseline and differential"/>
</dbReference>
<dbReference type="GO" id="GO:0015629">
    <property type="term" value="C:actin cytoskeleton"/>
    <property type="evidence" value="ECO:0000266"/>
    <property type="project" value="MGI"/>
</dbReference>
<dbReference type="GO" id="GO:0030016">
    <property type="term" value="C:myofibril"/>
    <property type="evidence" value="ECO:0000314"/>
    <property type="project" value="MGI"/>
</dbReference>
<dbReference type="GO" id="GO:0003779">
    <property type="term" value="F:actin binding"/>
    <property type="evidence" value="ECO:0007669"/>
    <property type="project" value="InterPro"/>
</dbReference>
<dbReference type="GO" id="GO:0046872">
    <property type="term" value="F:metal ion binding"/>
    <property type="evidence" value="ECO:0007669"/>
    <property type="project" value="UniProtKB-KW"/>
</dbReference>
<dbReference type="GO" id="GO:0007010">
    <property type="term" value="P:cytoskeleton organization"/>
    <property type="evidence" value="ECO:0007669"/>
    <property type="project" value="InterPro"/>
</dbReference>
<dbReference type="GO" id="GO:0045944">
    <property type="term" value="P:positive regulation of transcription by RNA polymerase II"/>
    <property type="evidence" value="ECO:0000315"/>
    <property type="project" value="MGI"/>
</dbReference>
<dbReference type="GO" id="GO:0006366">
    <property type="term" value="P:transcription by RNA polymerase II"/>
    <property type="evidence" value="ECO:0000315"/>
    <property type="project" value="MGI"/>
</dbReference>
<dbReference type="CDD" id="cd09327">
    <property type="entry name" value="LIM1_abLIM"/>
    <property type="match status" value="1"/>
</dbReference>
<dbReference type="CDD" id="cd09328">
    <property type="entry name" value="LIM2_abLIM"/>
    <property type="match status" value="1"/>
</dbReference>
<dbReference type="CDD" id="cd09329">
    <property type="entry name" value="LIM3_abLIM"/>
    <property type="match status" value="1"/>
</dbReference>
<dbReference type="CDD" id="cd09330">
    <property type="entry name" value="LIM4_abLIM"/>
    <property type="match status" value="1"/>
</dbReference>
<dbReference type="FunFam" id="2.10.110.10:FF:000003">
    <property type="entry name" value="actin-binding LIM protein 1 isoform X1"/>
    <property type="match status" value="1"/>
</dbReference>
<dbReference type="FunFam" id="2.10.110.10:FF:000004">
    <property type="entry name" value="actin-binding LIM protein 1 isoform X1"/>
    <property type="match status" value="1"/>
</dbReference>
<dbReference type="FunFam" id="2.10.110.10:FF:000007">
    <property type="entry name" value="actin-binding LIM protein 1 isoform X1"/>
    <property type="match status" value="1"/>
</dbReference>
<dbReference type="FunFam" id="1.10.950.10:FF:000001">
    <property type="entry name" value="actin-binding LIM protein 1 isoform X2"/>
    <property type="match status" value="1"/>
</dbReference>
<dbReference type="FunFam" id="2.10.110.10:FF:000053">
    <property type="entry name" value="Actin-binding LIM protein family, member 2"/>
    <property type="match status" value="1"/>
</dbReference>
<dbReference type="Gene3D" id="2.10.110.10">
    <property type="entry name" value="Cysteine Rich Protein"/>
    <property type="match status" value="4"/>
</dbReference>
<dbReference type="Gene3D" id="1.10.950.10">
    <property type="entry name" value="Villin headpiece domain"/>
    <property type="match status" value="1"/>
</dbReference>
<dbReference type="InterPro" id="IPR032402">
    <property type="entry name" value="AbLIM_anchor"/>
</dbReference>
<dbReference type="InterPro" id="IPR051618">
    <property type="entry name" value="Actin-binding_LIM"/>
</dbReference>
<dbReference type="InterPro" id="IPR003128">
    <property type="entry name" value="Villin_headpiece"/>
</dbReference>
<dbReference type="InterPro" id="IPR036886">
    <property type="entry name" value="Villin_headpiece_dom_sf"/>
</dbReference>
<dbReference type="InterPro" id="IPR001781">
    <property type="entry name" value="Znf_LIM"/>
</dbReference>
<dbReference type="PANTHER" id="PTHR24213">
    <property type="entry name" value="ACTIN-BINDING LIM PROTEIN"/>
    <property type="match status" value="1"/>
</dbReference>
<dbReference type="PANTHER" id="PTHR24213:SF6">
    <property type="entry name" value="ACTIN-BINDING LIM PROTEIN 2"/>
    <property type="match status" value="1"/>
</dbReference>
<dbReference type="Pfam" id="PF16182">
    <property type="entry name" value="AbLIM_anchor"/>
    <property type="match status" value="2"/>
</dbReference>
<dbReference type="Pfam" id="PF00412">
    <property type="entry name" value="LIM"/>
    <property type="match status" value="4"/>
</dbReference>
<dbReference type="Pfam" id="PF02209">
    <property type="entry name" value="VHP"/>
    <property type="match status" value="1"/>
</dbReference>
<dbReference type="SMART" id="SM00132">
    <property type="entry name" value="LIM"/>
    <property type="match status" value="4"/>
</dbReference>
<dbReference type="SMART" id="SM00153">
    <property type="entry name" value="VHP"/>
    <property type="match status" value="1"/>
</dbReference>
<dbReference type="SUPFAM" id="SSF57716">
    <property type="entry name" value="Glucocorticoid receptor-like (DNA-binding domain)"/>
    <property type="match status" value="6"/>
</dbReference>
<dbReference type="SUPFAM" id="SSF47050">
    <property type="entry name" value="VHP, Villin headpiece domain"/>
    <property type="match status" value="1"/>
</dbReference>
<dbReference type="PROSITE" id="PS51089">
    <property type="entry name" value="HP"/>
    <property type="match status" value="1"/>
</dbReference>
<dbReference type="PROSITE" id="PS00478">
    <property type="entry name" value="LIM_DOMAIN_1"/>
    <property type="match status" value="4"/>
</dbReference>
<dbReference type="PROSITE" id="PS50023">
    <property type="entry name" value="LIM_DOMAIN_2"/>
    <property type="match status" value="4"/>
</dbReference>
<evidence type="ECO:0000250" key="1"/>
<evidence type="ECO:0000250" key="2">
    <source>
        <dbReference type="UniProtKB" id="Q6H8Q1"/>
    </source>
</evidence>
<evidence type="ECO:0000250" key="3">
    <source>
        <dbReference type="UniProtKB" id="Q6KC51"/>
    </source>
</evidence>
<evidence type="ECO:0000255" key="4">
    <source>
        <dbReference type="PROSITE-ProRule" id="PRU00125"/>
    </source>
</evidence>
<evidence type="ECO:0000255" key="5">
    <source>
        <dbReference type="PROSITE-ProRule" id="PRU00595"/>
    </source>
</evidence>
<evidence type="ECO:0000256" key="6">
    <source>
        <dbReference type="SAM" id="MobiDB-lite"/>
    </source>
</evidence>
<evidence type="ECO:0000269" key="7">
    <source>
    </source>
</evidence>
<evidence type="ECO:0000303" key="8">
    <source>
    </source>
</evidence>
<evidence type="ECO:0000303" key="9">
    <source>
    </source>
</evidence>
<evidence type="ECO:0000303" key="10">
    <source ref="1"/>
</evidence>
<evidence type="ECO:0000303" key="11">
    <source ref="2"/>
</evidence>
<evidence type="ECO:0000305" key="12"/>
<evidence type="ECO:0007744" key="13">
    <source>
    </source>
</evidence>
<gene>
    <name type="primary">Ablim2</name>
</gene>
<organism>
    <name type="scientific">Mus musculus</name>
    <name type="common">Mouse</name>
    <dbReference type="NCBI Taxonomy" id="10090"/>
    <lineage>
        <taxon>Eukaryota</taxon>
        <taxon>Metazoa</taxon>
        <taxon>Chordata</taxon>
        <taxon>Craniata</taxon>
        <taxon>Vertebrata</taxon>
        <taxon>Euteleostomi</taxon>
        <taxon>Mammalia</taxon>
        <taxon>Eutheria</taxon>
        <taxon>Euarchontoglires</taxon>
        <taxon>Glires</taxon>
        <taxon>Rodentia</taxon>
        <taxon>Myomorpha</taxon>
        <taxon>Muroidea</taxon>
        <taxon>Muridae</taxon>
        <taxon>Murinae</taxon>
        <taxon>Mus</taxon>
        <taxon>Mus</taxon>
    </lineage>
</organism>
<proteinExistence type="evidence at protein level"/>
<reference key="1">
    <citation type="submission" date="2004-06" db="EMBL/GenBank/DDBJ databases">
        <title>Structure and transcriptional activity of the ABLIM2 gene of human, mouse and rat.</title>
        <authorList>
            <person name="Klimov E.A."/>
            <person name="Rakhmanaliev E.R."/>
            <person name="Rudco O.I."/>
        </authorList>
    </citation>
    <scope>NUCLEOTIDE SEQUENCE [MRNA] (ISOFORMS 1 AND 2)</scope>
    <source>
        <strain>C57BL/6J</strain>
        <tissue>Brain</tissue>
    </source>
</reference>
<reference key="2">
    <citation type="submission" date="2003-04" db="EMBL/GenBank/DDBJ databases">
        <title>Identification of a novel actin-binding LIM protein (abLIM2) in developing cornea.</title>
        <authorList>
            <person name="Xu Z.-P."/>
            <person name="Piatigorsky J."/>
        </authorList>
    </citation>
    <scope>NUCLEOTIDE SEQUENCE [MRNA] (ISOFORM 3)</scope>
    <source>
        <strain>C57BL/6J</strain>
    </source>
</reference>
<reference key="3">
    <citation type="journal article" date="2005" name="Science">
        <title>The transcriptional landscape of the mammalian genome.</title>
        <authorList>
            <person name="Carninci P."/>
            <person name="Kasukawa T."/>
            <person name="Katayama S."/>
            <person name="Gough J."/>
            <person name="Frith M.C."/>
            <person name="Maeda N."/>
            <person name="Oyama R."/>
            <person name="Ravasi T."/>
            <person name="Lenhard B."/>
            <person name="Wells C."/>
            <person name="Kodzius R."/>
            <person name="Shimokawa K."/>
            <person name="Bajic V.B."/>
            <person name="Brenner S.E."/>
            <person name="Batalov S."/>
            <person name="Forrest A.R."/>
            <person name="Zavolan M."/>
            <person name="Davis M.J."/>
            <person name="Wilming L.G."/>
            <person name="Aidinis V."/>
            <person name="Allen J.E."/>
            <person name="Ambesi-Impiombato A."/>
            <person name="Apweiler R."/>
            <person name="Aturaliya R.N."/>
            <person name="Bailey T.L."/>
            <person name="Bansal M."/>
            <person name="Baxter L."/>
            <person name="Beisel K.W."/>
            <person name="Bersano T."/>
            <person name="Bono H."/>
            <person name="Chalk A.M."/>
            <person name="Chiu K.P."/>
            <person name="Choudhary V."/>
            <person name="Christoffels A."/>
            <person name="Clutterbuck D.R."/>
            <person name="Crowe M.L."/>
            <person name="Dalla E."/>
            <person name="Dalrymple B.P."/>
            <person name="de Bono B."/>
            <person name="Della Gatta G."/>
            <person name="di Bernardo D."/>
            <person name="Down T."/>
            <person name="Engstrom P."/>
            <person name="Fagiolini M."/>
            <person name="Faulkner G."/>
            <person name="Fletcher C.F."/>
            <person name="Fukushima T."/>
            <person name="Furuno M."/>
            <person name="Futaki S."/>
            <person name="Gariboldi M."/>
            <person name="Georgii-Hemming P."/>
            <person name="Gingeras T.R."/>
            <person name="Gojobori T."/>
            <person name="Green R.E."/>
            <person name="Gustincich S."/>
            <person name="Harbers M."/>
            <person name="Hayashi Y."/>
            <person name="Hensch T.K."/>
            <person name="Hirokawa N."/>
            <person name="Hill D."/>
            <person name="Huminiecki L."/>
            <person name="Iacono M."/>
            <person name="Ikeo K."/>
            <person name="Iwama A."/>
            <person name="Ishikawa T."/>
            <person name="Jakt M."/>
            <person name="Kanapin A."/>
            <person name="Katoh M."/>
            <person name="Kawasawa Y."/>
            <person name="Kelso J."/>
            <person name="Kitamura H."/>
            <person name="Kitano H."/>
            <person name="Kollias G."/>
            <person name="Krishnan S.P."/>
            <person name="Kruger A."/>
            <person name="Kummerfeld S.K."/>
            <person name="Kurochkin I.V."/>
            <person name="Lareau L.F."/>
            <person name="Lazarevic D."/>
            <person name="Lipovich L."/>
            <person name="Liu J."/>
            <person name="Liuni S."/>
            <person name="McWilliam S."/>
            <person name="Madan Babu M."/>
            <person name="Madera M."/>
            <person name="Marchionni L."/>
            <person name="Matsuda H."/>
            <person name="Matsuzawa S."/>
            <person name="Miki H."/>
            <person name="Mignone F."/>
            <person name="Miyake S."/>
            <person name="Morris K."/>
            <person name="Mottagui-Tabar S."/>
            <person name="Mulder N."/>
            <person name="Nakano N."/>
            <person name="Nakauchi H."/>
            <person name="Ng P."/>
            <person name="Nilsson R."/>
            <person name="Nishiguchi S."/>
            <person name="Nishikawa S."/>
            <person name="Nori F."/>
            <person name="Ohara O."/>
            <person name="Okazaki Y."/>
            <person name="Orlando V."/>
            <person name="Pang K.C."/>
            <person name="Pavan W.J."/>
            <person name="Pavesi G."/>
            <person name="Pesole G."/>
            <person name="Petrovsky N."/>
            <person name="Piazza S."/>
            <person name="Reed J."/>
            <person name="Reid J.F."/>
            <person name="Ring B.Z."/>
            <person name="Ringwald M."/>
            <person name="Rost B."/>
            <person name="Ruan Y."/>
            <person name="Salzberg S.L."/>
            <person name="Sandelin A."/>
            <person name="Schneider C."/>
            <person name="Schoenbach C."/>
            <person name="Sekiguchi K."/>
            <person name="Semple C.A."/>
            <person name="Seno S."/>
            <person name="Sessa L."/>
            <person name="Sheng Y."/>
            <person name="Shibata Y."/>
            <person name="Shimada H."/>
            <person name="Shimada K."/>
            <person name="Silva D."/>
            <person name="Sinclair B."/>
            <person name="Sperling S."/>
            <person name="Stupka E."/>
            <person name="Sugiura K."/>
            <person name="Sultana R."/>
            <person name="Takenaka Y."/>
            <person name="Taki K."/>
            <person name="Tammoja K."/>
            <person name="Tan S.L."/>
            <person name="Tang S."/>
            <person name="Taylor M.S."/>
            <person name="Tegner J."/>
            <person name="Teichmann S.A."/>
            <person name="Ueda H.R."/>
            <person name="van Nimwegen E."/>
            <person name="Verardo R."/>
            <person name="Wei C.L."/>
            <person name="Yagi K."/>
            <person name="Yamanishi H."/>
            <person name="Zabarovsky E."/>
            <person name="Zhu S."/>
            <person name="Zimmer A."/>
            <person name="Hide W."/>
            <person name="Bult C."/>
            <person name="Grimmond S.M."/>
            <person name="Teasdale R.D."/>
            <person name="Liu E.T."/>
            <person name="Brusic V."/>
            <person name="Quackenbush J."/>
            <person name="Wahlestedt C."/>
            <person name="Mattick J.S."/>
            <person name="Hume D.A."/>
            <person name="Kai C."/>
            <person name="Sasaki D."/>
            <person name="Tomaru Y."/>
            <person name="Fukuda S."/>
            <person name="Kanamori-Katayama M."/>
            <person name="Suzuki M."/>
            <person name="Aoki J."/>
            <person name="Arakawa T."/>
            <person name="Iida J."/>
            <person name="Imamura K."/>
            <person name="Itoh M."/>
            <person name="Kato T."/>
            <person name="Kawaji H."/>
            <person name="Kawagashira N."/>
            <person name="Kawashima T."/>
            <person name="Kojima M."/>
            <person name="Kondo S."/>
            <person name="Konno H."/>
            <person name="Nakano K."/>
            <person name="Ninomiya N."/>
            <person name="Nishio T."/>
            <person name="Okada M."/>
            <person name="Plessy C."/>
            <person name="Shibata K."/>
            <person name="Shiraki T."/>
            <person name="Suzuki S."/>
            <person name="Tagami M."/>
            <person name="Waki K."/>
            <person name="Watahiki A."/>
            <person name="Okamura-Oho Y."/>
            <person name="Suzuki H."/>
            <person name="Kawai J."/>
            <person name="Hayashizaki Y."/>
        </authorList>
    </citation>
    <scope>NUCLEOTIDE SEQUENCE [LARGE SCALE MRNA] (ISOFORMS 1; 4 AND 5)</scope>
    <source>
        <strain>C57BL/6J</strain>
        <tissue>Cerebellum</tissue>
        <tissue>Corpora quadrigemina</tissue>
        <tissue>Medulla oblongata</tissue>
    </source>
</reference>
<reference key="4">
    <citation type="journal article" date="2004" name="Genome Res.">
        <title>The status, quality, and expansion of the NIH full-length cDNA project: the Mammalian Gene Collection (MGC).</title>
        <authorList>
            <consortium name="The MGC Project Team"/>
        </authorList>
    </citation>
    <scope>NUCLEOTIDE SEQUENCE [LARGE SCALE MRNA] (ISOFORM 3)</scope>
    <source>
        <tissue>Embryo</tissue>
    </source>
</reference>
<reference key="5">
    <citation type="journal article" date="2006" name="Mol. Cell. Proteomics">
        <title>Comprehensive identification of phosphorylation sites in postsynaptic density preparations.</title>
        <authorList>
            <person name="Trinidad J.C."/>
            <person name="Specht C.G."/>
            <person name="Thalhammer A."/>
            <person name="Schoepfer R."/>
            <person name="Burlingame A.L."/>
        </authorList>
    </citation>
    <scope>IDENTIFICATION BY MASS SPECTROMETRY [LARGE SCALE ANALYSIS]</scope>
    <source>
        <tissue>Brain</tissue>
    </source>
</reference>
<reference key="6">
    <citation type="journal article" date="2007" name="J. Biol. Chem.">
        <title>Two novel members of the ABLIM protein family, ABLIM-2 and -3, associate with STARS and directly bind F-actin.</title>
        <authorList>
            <person name="Barrientos T."/>
            <person name="Frank D."/>
            <person name="Kuwahara K."/>
            <person name="Bezprozvannaya S."/>
            <person name="Pipes G.C.T."/>
            <person name="Bassel-Duby R."/>
            <person name="Richardson J.A."/>
            <person name="Katus H.A."/>
            <person name="Olson E.N."/>
            <person name="Frey N."/>
        </authorList>
    </citation>
    <scope>SUBCELLULAR LOCATION</scope>
    <scope>TISSUE SPECIFICITY</scope>
    <scope>INTERACTION WITH F-ACTIN AND ABRA</scope>
</reference>
<reference key="7">
    <citation type="journal article" date="2010" name="Cell">
        <title>A tissue-specific atlas of mouse protein phosphorylation and expression.</title>
        <authorList>
            <person name="Huttlin E.L."/>
            <person name="Jedrychowski M.P."/>
            <person name="Elias J.E."/>
            <person name="Goswami T."/>
            <person name="Rad R."/>
            <person name="Beausoleil S.A."/>
            <person name="Villen J."/>
            <person name="Haas W."/>
            <person name="Sowa M.E."/>
            <person name="Gygi S.P."/>
        </authorList>
    </citation>
    <scope>PHOSPHORYLATION [LARGE SCALE ANALYSIS] AT SER-294; SER-368 AND THR-473</scope>
    <scope>PHOSPHORYLATION [LARGE SCALE ANALYSIS] AT SER-351 AND SER-356 (ISOFORM 4)</scope>
    <scope>IDENTIFICATION BY MASS SPECTROMETRY [LARGE SCALE ANALYSIS]</scope>
    <source>
        <tissue>Brain</tissue>
        <tissue>Brown adipose tissue</tissue>
        <tissue>Heart</tissue>
        <tissue>Kidney</tissue>
        <tissue>Pancreas</tissue>
    </source>
</reference>